<protein>
    <recommendedName>
        <fullName>Pleiotropic regulatory protein</fullName>
    </recommendedName>
</protein>
<evidence type="ECO:0000250" key="1"/>
<evidence type="ECO:0000255" key="2"/>
<evidence type="ECO:0000305" key="3"/>
<gene>
    <name type="primary">degT</name>
</gene>
<proteinExistence type="inferred from homology"/>
<feature type="chain" id="PRO_0000110010" description="Pleiotropic regulatory protein">
    <location>
        <begin position="1"/>
        <end position="372"/>
    </location>
</feature>
<feature type="DNA-binding region" description="H-T-H motif" evidence="2">
    <location>
        <begin position="160"/>
        <end position="179"/>
    </location>
</feature>
<feature type="region of interest" description="Hydrophobic">
    <location>
        <begin position="53"/>
        <end position="158"/>
    </location>
</feature>
<feature type="modified residue" description="N6-(pyridoxal phosphate)lysine" evidence="1">
    <location>
        <position position="186"/>
    </location>
</feature>
<accession>P15263</accession>
<reference key="1">
    <citation type="journal article" date="1990" name="J. Bacteriol.">
        <title>Nucleotide sequence and cloning in Bacillus subtilis of the Bacillus stearothermophilus pleiotropic regulatory gene degT.</title>
        <authorList>
            <person name="Takagi M."/>
            <person name="Takada H."/>
            <person name="Imanaka T."/>
        </authorList>
    </citation>
    <scope>NUCLEOTIDE SEQUENCE [GENOMIC DNA]</scope>
    <source>
        <strain>ATCC 29609 / DSM 2027 / NCA 1503 / NCIMB 8924</strain>
    </source>
</reference>
<keyword id="KW-1003">Cell membrane</keyword>
<keyword id="KW-0238">DNA-binding</keyword>
<keyword id="KW-0472">Membrane</keyword>
<keyword id="KW-0663">Pyridoxal phosphate</keyword>
<keyword id="KW-0804">Transcription</keyword>
<keyword id="KW-0805">Transcription regulation</keyword>
<keyword id="KW-0902">Two-component regulatory system</keyword>
<sequence length="372" mass="41246">MNVPMLDLSEQYEQLKPEIMRVLDEVMRSSRFILGDYVKKLEADIAAYSRAKHGIGCGNGSDAIHIALQAAGVGPGDEVITTAFTFFATAGSIARAGAKPVFVDIDPVTFNIDPAQVEAAVTEKTKAIIPVHLYGQMADMEAIAAIAKRHGLVVIEDAAQAIGAKYNGKCVGELGTAATYSFFPTKNLGAYGDGGMIITNDDELAEKCRVIRVHGSKPKYYHHVLGYNSRLDEMQAAILSVKFPHLDRWTEQRRKHAATYTRLLEEAVGDLVVTPKEVDGRYHVFHQYTIRAPKRDELQAFLKEQGIATMVYYPLPLHLQPVFASLGYKEGQLPEAEKAAKEALSLPMFPELKEEQQQYVVEKIAEFYRHFA</sequence>
<dbReference type="EMBL" id="M29002">
    <property type="protein sequence ID" value="AAA22387.1"/>
    <property type="molecule type" value="Genomic_DNA"/>
</dbReference>
<dbReference type="PIR" id="I39836">
    <property type="entry name" value="I39836"/>
</dbReference>
<dbReference type="RefSeq" id="WP_033014895.1">
    <property type="nucleotide sequence ID" value="NZ_RCTK01000027.1"/>
</dbReference>
<dbReference type="SMR" id="P15263"/>
<dbReference type="OrthoDB" id="9810913at2"/>
<dbReference type="GO" id="GO:0005886">
    <property type="term" value="C:plasma membrane"/>
    <property type="evidence" value="ECO:0007669"/>
    <property type="project" value="UniProtKB-SubCell"/>
</dbReference>
<dbReference type="GO" id="GO:0003677">
    <property type="term" value="F:DNA binding"/>
    <property type="evidence" value="ECO:0007669"/>
    <property type="project" value="UniProtKB-KW"/>
</dbReference>
<dbReference type="GO" id="GO:0030170">
    <property type="term" value="F:pyridoxal phosphate binding"/>
    <property type="evidence" value="ECO:0007669"/>
    <property type="project" value="TreeGrafter"/>
</dbReference>
<dbReference type="GO" id="GO:0008483">
    <property type="term" value="F:transaminase activity"/>
    <property type="evidence" value="ECO:0007669"/>
    <property type="project" value="TreeGrafter"/>
</dbReference>
<dbReference type="GO" id="GO:0000160">
    <property type="term" value="P:phosphorelay signal transduction system"/>
    <property type="evidence" value="ECO:0007669"/>
    <property type="project" value="UniProtKB-KW"/>
</dbReference>
<dbReference type="GO" id="GO:0000271">
    <property type="term" value="P:polysaccharide biosynthetic process"/>
    <property type="evidence" value="ECO:0007669"/>
    <property type="project" value="TreeGrafter"/>
</dbReference>
<dbReference type="CDD" id="cd00616">
    <property type="entry name" value="AHBA_syn"/>
    <property type="match status" value="1"/>
</dbReference>
<dbReference type="FunFam" id="3.40.640.10:FF:000089">
    <property type="entry name" value="Aminotransferase, DegT/DnrJ/EryC1/StrS family"/>
    <property type="match status" value="1"/>
</dbReference>
<dbReference type="Gene3D" id="3.90.1150.10">
    <property type="entry name" value="Aspartate Aminotransferase, domain 1"/>
    <property type="match status" value="1"/>
</dbReference>
<dbReference type="Gene3D" id="3.40.640.10">
    <property type="entry name" value="Type I PLP-dependent aspartate aminotransferase-like (Major domain)"/>
    <property type="match status" value="1"/>
</dbReference>
<dbReference type="InterPro" id="IPR000653">
    <property type="entry name" value="DegT/StrS_aminotransferase"/>
</dbReference>
<dbReference type="InterPro" id="IPR015424">
    <property type="entry name" value="PyrdxlP-dep_Trfase"/>
</dbReference>
<dbReference type="InterPro" id="IPR015421">
    <property type="entry name" value="PyrdxlP-dep_Trfase_major"/>
</dbReference>
<dbReference type="InterPro" id="IPR015422">
    <property type="entry name" value="PyrdxlP-dep_Trfase_small"/>
</dbReference>
<dbReference type="PANTHER" id="PTHR30244:SF36">
    <property type="entry name" value="3-OXO-GLUCOSE-6-PHOSPHATE:GLUTAMATE AMINOTRANSFERASE"/>
    <property type="match status" value="1"/>
</dbReference>
<dbReference type="PANTHER" id="PTHR30244">
    <property type="entry name" value="TRANSAMINASE"/>
    <property type="match status" value="1"/>
</dbReference>
<dbReference type="Pfam" id="PF01041">
    <property type="entry name" value="DegT_DnrJ_EryC1"/>
    <property type="match status" value="1"/>
</dbReference>
<dbReference type="PIRSF" id="PIRSF000390">
    <property type="entry name" value="PLP_StrS"/>
    <property type="match status" value="1"/>
</dbReference>
<dbReference type="SUPFAM" id="SSF53383">
    <property type="entry name" value="PLP-dependent transferases"/>
    <property type="match status" value="1"/>
</dbReference>
<name>DEGT_GEOSE</name>
<comment type="function">
    <text>This membrane protein may function as a sensor protein and may transfer the signal of environmental stimuli to the regulatory region of target genes to activate or repress transcription of the genes.</text>
</comment>
<comment type="subcellular location">
    <subcellularLocation>
        <location evidence="3">Cell membrane</location>
        <topology evidence="3">Peripheral membrane protein</topology>
    </subcellularLocation>
</comment>
<comment type="similarity">
    <text evidence="3">Belongs to the DegT/DnrJ/EryC1 family.</text>
</comment>
<organism>
    <name type="scientific">Geobacillus stearothermophilus</name>
    <name type="common">Bacillus stearothermophilus</name>
    <dbReference type="NCBI Taxonomy" id="1422"/>
    <lineage>
        <taxon>Bacteria</taxon>
        <taxon>Bacillati</taxon>
        <taxon>Bacillota</taxon>
        <taxon>Bacilli</taxon>
        <taxon>Bacillales</taxon>
        <taxon>Anoxybacillaceae</taxon>
        <taxon>Geobacillus</taxon>
    </lineage>
</organism>